<sequence length="300" mass="30858">MTTVGFDVAARLGTLLTAMVTPFSGDGSLDTATAARLANHLVDQGCDGLVVSGTTGESPTTTDGEKIELLRAVLEAVGDRARVIAGAGTYDTAHSIRLAKACAAEGAHGLLVVTPYYSKPPQRGLQAHFTAVADATELPMLLYDIPGRSAVPIEPDTIRALASHPNIVGVKDAKADLHSGAQIMADTGLAYYSGDDALNLPWLAMGATGFISVIAHLAAGQLRELLSAFGSGDIATARKINIAVAPLCNAMSRLGGVTLSKAGLRLQGIDVGDPRLPQVAATPEQIDALAADMRAASVLR</sequence>
<protein>
    <recommendedName>
        <fullName evidence="1">4-hydroxy-tetrahydrodipicolinate synthase</fullName>
        <shortName evidence="1">HTPA synthase</shortName>
        <ecNumber evidence="1">4.3.3.7</ecNumber>
    </recommendedName>
</protein>
<dbReference type="EC" id="4.3.3.7" evidence="1"/>
<dbReference type="EMBL" id="AM408590">
    <property type="protein sequence ID" value="CAL72757.1"/>
    <property type="molecule type" value="Genomic_DNA"/>
</dbReference>
<dbReference type="RefSeq" id="WP_003900564.1">
    <property type="nucleotide sequence ID" value="NC_008769.1"/>
</dbReference>
<dbReference type="SMR" id="A1KM94"/>
<dbReference type="GeneID" id="45426740"/>
<dbReference type="KEGG" id="mbb:BCG_2769c"/>
<dbReference type="HOGENOM" id="CLU_049343_7_1_11"/>
<dbReference type="UniPathway" id="UPA00034">
    <property type="reaction ID" value="UER00017"/>
</dbReference>
<dbReference type="Proteomes" id="UP000001472">
    <property type="component" value="Chromosome"/>
</dbReference>
<dbReference type="GO" id="GO:0005829">
    <property type="term" value="C:cytosol"/>
    <property type="evidence" value="ECO:0007669"/>
    <property type="project" value="TreeGrafter"/>
</dbReference>
<dbReference type="GO" id="GO:0008840">
    <property type="term" value="F:4-hydroxy-tetrahydrodipicolinate synthase activity"/>
    <property type="evidence" value="ECO:0007669"/>
    <property type="project" value="UniProtKB-UniRule"/>
</dbReference>
<dbReference type="GO" id="GO:0019877">
    <property type="term" value="P:diaminopimelate biosynthetic process"/>
    <property type="evidence" value="ECO:0007669"/>
    <property type="project" value="UniProtKB-UniRule"/>
</dbReference>
<dbReference type="GO" id="GO:0009089">
    <property type="term" value="P:lysine biosynthetic process via diaminopimelate"/>
    <property type="evidence" value="ECO:0007669"/>
    <property type="project" value="UniProtKB-UniRule"/>
</dbReference>
<dbReference type="CDD" id="cd00950">
    <property type="entry name" value="DHDPS"/>
    <property type="match status" value="1"/>
</dbReference>
<dbReference type="FunFam" id="3.20.20.70:FF:000273">
    <property type="entry name" value="4-hydroxy-tetrahydrodipicolinate synthase"/>
    <property type="match status" value="1"/>
</dbReference>
<dbReference type="Gene3D" id="3.20.20.70">
    <property type="entry name" value="Aldolase class I"/>
    <property type="match status" value="1"/>
</dbReference>
<dbReference type="HAMAP" id="MF_00418">
    <property type="entry name" value="DapA"/>
    <property type="match status" value="1"/>
</dbReference>
<dbReference type="InterPro" id="IPR013785">
    <property type="entry name" value="Aldolase_TIM"/>
</dbReference>
<dbReference type="InterPro" id="IPR005263">
    <property type="entry name" value="DapA"/>
</dbReference>
<dbReference type="InterPro" id="IPR002220">
    <property type="entry name" value="DapA-like"/>
</dbReference>
<dbReference type="InterPro" id="IPR020625">
    <property type="entry name" value="Schiff_base-form_aldolases_AS"/>
</dbReference>
<dbReference type="InterPro" id="IPR020624">
    <property type="entry name" value="Schiff_base-form_aldolases_CS"/>
</dbReference>
<dbReference type="NCBIfam" id="TIGR00674">
    <property type="entry name" value="dapA"/>
    <property type="match status" value="1"/>
</dbReference>
<dbReference type="PANTHER" id="PTHR12128:SF66">
    <property type="entry name" value="4-HYDROXY-2-OXOGLUTARATE ALDOLASE, MITOCHONDRIAL"/>
    <property type="match status" value="1"/>
</dbReference>
<dbReference type="PANTHER" id="PTHR12128">
    <property type="entry name" value="DIHYDRODIPICOLINATE SYNTHASE"/>
    <property type="match status" value="1"/>
</dbReference>
<dbReference type="Pfam" id="PF00701">
    <property type="entry name" value="DHDPS"/>
    <property type="match status" value="1"/>
</dbReference>
<dbReference type="PIRSF" id="PIRSF001365">
    <property type="entry name" value="DHDPS"/>
    <property type="match status" value="1"/>
</dbReference>
<dbReference type="PRINTS" id="PR00146">
    <property type="entry name" value="DHPICSNTHASE"/>
</dbReference>
<dbReference type="SMART" id="SM01130">
    <property type="entry name" value="DHDPS"/>
    <property type="match status" value="1"/>
</dbReference>
<dbReference type="SUPFAM" id="SSF51569">
    <property type="entry name" value="Aldolase"/>
    <property type="match status" value="1"/>
</dbReference>
<dbReference type="PROSITE" id="PS00665">
    <property type="entry name" value="DHDPS_1"/>
    <property type="match status" value="1"/>
</dbReference>
<dbReference type="PROSITE" id="PS00666">
    <property type="entry name" value="DHDPS_2"/>
    <property type="match status" value="1"/>
</dbReference>
<accession>A1KM94</accession>
<name>DAPA_MYCBP</name>
<comment type="function">
    <text evidence="1">Catalyzes the condensation of (S)-aspartate-beta-semialdehyde [(S)-ASA] and pyruvate to 4-hydroxy-tetrahydrodipicolinate (HTPA).</text>
</comment>
<comment type="catalytic activity">
    <reaction evidence="1">
        <text>L-aspartate 4-semialdehyde + pyruvate = (2S,4S)-4-hydroxy-2,3,4,5-tetrahydrodipicolinate + H2O + H(+)</text>
        <dbReference type="Rhea" id="RHEA:34171"/>
        <dbReference type="ChEBI" id="CHEBI:15361"/>
        <dbReference type="ChEBI" id="CHEBI:15377"/>
        <dbReference type="ChEBI" id="CHEBI:15378"/>
        <dbReference type="ChEBI" id="CHEBI:67139"/>
        <dbReference type="ChEBI" id="CHEBI:537519"/>
        <dbReference type="EC" id="4.3.3.7"/>
    </reaction>
</comment>
<comment type="pathway">
    <text evidence="1">Amino-acid biosynthesis; L-lysine biosynthesis via DAP pathway; (S)-tetrahydrodipicolinate from L-aspartate: step 3/4.</text>
</comment>
<comment type="subunit">
    <text evidence="1">Homotetramer; dimer of dimers.</text>
</comment>
<comment type="subcellular location">
    <subcellularLocation>
        <location evidence="1">Cytoplasm</location>
    </subcellularLocation>
</comment>
<comment type="similarity">
    <text evidence="1">Belongs to the DapA family.</text>
</comment>
<comment type="caution">
    <text evidence="2">Was originally thought to be a dihydrodipicolinate synthase (DHDPS), catalyzing the condensation of (S)-aspartate-beta-semialdehyde [(S)-ASA] and pyruvate to dihydrodipicolinate (DHDP). However, it was shown in E.coli that the product of the enzymatic reaction is not dihydrodipicolinate but in fact (4S)-4-hydroxy-2,3,4,5-tetrahydro-(2S)-dipicolinic acid (HTPA), and that the consecutive dehydration reaction leading to DHDP is not spontaneous but catalyzed by DapB.</text>
</comment>
<organism>
    <name type="scientific">Mycobacterium bovis (strain BCG / Pasteur 1173P2)</name>
    <dbReference type="NCBI Taxonomy" id="410289"/>
    <lineage>
        <taxon>Bacteria</taxon>
        <taxon>Bacillati</taxon>
        <taxon>Actinomycetota</taxon>
        <taxon>Actinomycetes</taxon>
        <taxon>Mycobacteriales</taxon>
        <taxon>Mycobacteriaceae</taxon>
        <taxon>Mycobacterium</taxon>
        <taxon>Mycobacterium tuberculosis complex</taxon>
    </lineage>
</organism>
<keyword id="KW-0028">Amino-acid biosynthesis</keyword>
<keyword id="KW-0963">Cytoplasm</keyword>
<keyword id="KW-0220">Diaminopimelate biosynthesis</keyword>
<keyword id="KW-0456">Lyase</keyword>
<keyword id="KW-0457">Lysine biosynthesis</keyword>
<keyword id="KW-0704">Schiff base</keyword>
<evidence type="ECO:0000255" key="1">
    <source>
        <dbReference type="HAMAP-Rule" id="MF_00418"/>
    </source>
</evidence>
<evidence type="ECO:0000305" key="2"/>
<proteinExistence type="inferred from homology"/>
<reference key="1">
    <citation type="journal article" date="2007" name="Proc. Natl. Acad. Sci. U.S.A.">
        <title>Genome plasticity of BCG and impact on vaccine efficacy.</title>
        <authorList>
            <person name="Brosch R."/>
            <person name="Gordon S.V."/>
            <person name="Garnier T."/>
            <person name="Eiglmeier K."/>
            <person name="Frigui W."/>
            <person name="Valenti P."/>
            <person name="Dos Santos S."/>
            <person name="Duthoy S."/>
            <person name="Lacroix C."/>
            <person name="Garcia-Pelayo C."/>
            <person name="Inwald J.K."/>
            <person name="Golby P."/>
            <person name="Garcia J.N."/>
            <person name="Hewinson R.G."/>
            <person name="Behr M.A."/>
            <person name="Quail M.A."/>
            <person name="Churcher C."/>
            <person name="Barrell B.G."/>
            <person name="Parkhill J."/>
            <person name="Cole S.T."/>
        </authorList>
    </citation>
    <scope>NUCLEOTIDE SEQUENCE [LARGE SCALE GENOMIC DNA]</scope>
    <source>
        <strain>BCG / Pasteur 1173P2</strain>
    </source>
</reference>
<gene>
    <name evidence="1" type="primary">dapA</name>
    <name type="ordered locus">BCG_2769c</name>
</gene>
<feature type="chain" id="PRO_1000050226" description="4-hydroxy-tetrahydrodipicolinate synthase">
    <location>
        <begin position="1"/>
        <end position="300"/>
    </location>
</feature>
<feature type="active site" description="Proton donor/acceptor" evidence="1">
    <location>
        <position position="143"/>
    </location>
</feature>
<feature type="active site" description="Schiff-base intermediate with substrate" evidence="1">
    <location>
        <position position="171"/>
    </location>
</feature>
<feature type="binding site" evidence="1">
    <location>
        <position position="55"/>
    </location>
    <ligand>
        <name>pyruvate</name>
        <dbReference type="ChEBI" id="CHEBI:15361"/>
    </ligand>
</feature>
<feature type="binding site" evidence="1">
    <location>
        <position position="211"/>
    </location>
    <ligand>
        <name>pyruvate</name>
        <dbReference type="ChEBI" id="CHEBI:15361"/>
    </ligand>
</feature>
<feature type="site" description="Part of a proton relay during catalysis" evidence="1">
    <location>
        <position position="54"/>
    </location>
</feature>
<feature type="site" description="Part of a proton relay during catalysis" evidence="1">
    <location>
        <position position="117"/>
    </location>
</feature>